<proteinExistence type="evidence at protein level"/>
<protein>
    <recommendedName>
        <fullName evidence="5">Periviscerokinin-1</fullName>
    </recommendedName>
</protein>
<name>PVK1_POPSU</name>
<sequence length="9" mass="1026">QGLIPFPRV</sequence>
<organism>
    <name type="scientific">Popa spurca</name>
    <name type="common">Twig praying mantis</name>
    <dbReference type="NCBI Taxonomy" id="444980"/>
    <lineage>
        <taxon>Eukaryota</taxon>
        <taxon>Metazoa</taxon>
        <taxon>Ecdysozoa</taxon>
        <taxon>Arthropoda</taxon>
        <taxon>Hexapoda</taxon>
        <taxon>Insecta</taxon>
        <taxon>Pterygota</taxon>
        <taxon>Neoptera</taxon>
        <taxon>Polyneoptera</taxon>
        <taxon>Dictyoptera</taxon>
        <taxon>Mantodea</taxon>
        <taxon>Eumantodea</taxon>
        <taxon>Mantoidea</taxon>
        <taxon>Mantidae</taxon>
        <taxon>Vatinae</taxon>
        <taxon>Popa</taxon>
    </lineage>
</organism>
<keyword id="KW-0027">Amidation</keyword>
<keyword id="KW-0903">Direct protein sequencing</keyword>
<keyword id="KW-0527">Neuropeptide</keyword>
<keyword id="KW-0873">Pyrrolidone carboxylic acid</keyword>
<keyword id="KW-0964">Secreted</keyword>
<evidence type="ECO:0000250" key="1">
    <source>
        <dbReference type="UniProtKB" id="P83923"/>
    </source>
</evidence>
<evidence type="ECO:0000250" key="2">
    <source>
        <dbReference type="UniProtKB" id="P84375"/>
    </source>
</evidence>
<evidence type="ECO:0000255" key="3"/>
<evidence type="ECO:0000269" key="4">
    <source>
    </source>
</evidence>
<evidence type="ECO:0000303" key="5">
    <source>
    </source>
</evidence>
<evidence type="ECO:0000305" key="6"/>
<accession>P86668</accession>
<dbReference type="GO" id="GO:0005576">
    <property type="term" value="C:extracellular region"/>
    <property type="evidence" value="ECO:0007669"/>
    <property type="project" value="UniProtKB-SubCell"/>
</dbReference>
<dbReference type="GO" id="GO:0007218">
    <property type="term" value="P:neuropeptide signaling pathway"/>
    <property type="evidence" value="ECO:0007669"/>
    <property type="project" value="UniProtKB-KW"/>
</dbReference>
<dbReference type="InterPro" id="IPR013231">
    <property type="entry name" value="Periviscerokinin"/>
</dbReference>
<dbReference type="Pfam" id="PF08259">
    <property type="entry name" value="Periviscerokin"/>
    <property type="match status" value="1"/>
</dbReference>
<comment type="function">
    <text evidence="1">Mediates visceral muscle contractile activity (myotropic activity).</text>
</comment>
<comment type="subcellular location">
    <subcellularLocation>
        <location evidence="2">Secreted</location>
    </subcellularLocation>
</comment>
<comment type="mass spectrometry" mass="1025.6" method="MALDI" evidence="4"/>
<comment type="mass spectrometry" mass="1008.6" method="MALDI" evidence="4">
    <text>With pyroglutamate at Gln-1.</text>
</comment>
<comment type="similarity">
    <text evidence="3">Belongs to the periviscerokinin family.</text>
</comment>
<reference evidence="6" key="1">
    <citation type="journal article" date="2010" name="Peptides">
        <title>CAPA-peptides of praying mantids (Mantodea).</title>
        <authorList>
            <person name="Koehler R."/>
            <person name="Predel R."/>
        </authorList>
    </citation>
    <scope>PROTEIN SEQUENCE</scope>
    <scope>MASS SPECTROMETRY</scope>
    <scope>PYROGLUTAMATE FORMATION AT GLN-1</scope>
    <scope>AMIDATION AT VAL-9</scope>
    <source>
        <tissue evidence="4">Abdominal perisympathetic organs</tissue>
    </source>
</reference>
<feature type="peptide" id="PRO_0000395576" description="Periviscerokinin-1" evidence="4">
    <location>
        <begin position="1"/>
        <end position="9"/>
    </location>
</feature>
<feature type="modified residue" description="Pyrrolidone carboxylic acid; partial" evidence="4">
    <location>
        <position position="1"/>
    </location>
</feature>
<feature type="modified residue" description="Valine amide" evidence="4">
    <location>
        <position position="9"/>
    </location>
</feature>
<feature type="unsure residue" description="L or I" evidence="4">
    <location>
        <position position="3"/>
    </location>
</feature>
<feature type="unsure residue" description="I or L" evidence="4">
    <location>
        <position position="4"/>
    </location>
</feature>